<comment type="catalytic activity">
    <reaction evidence="2">
        <text>2-formamido-N(1)-(5-O-phospho-beta-D-ribosyl)acetamidine + ATP = 5-amino-1-(5-phospho-beta-D-ribosyl)imidazole + ADP + phosphate + H(+)</text>
        <dbReference type="Rhea" id="RHEA:23032"/>
        <dbReference type="ChEBI" id="CHEBI:15378"/>
        <dbReference type="ChEBI" id="CHEBI:30616"/>
        <dbReference type="ChEBI" id="CHEBI:43474"/>
        <dbReference type="ChEBI" id="CHEBI:137981"/>
        <dbReference type="ChEBI" id="CHEBI:147287"/>
        <dbReference type="ChEBI" id="CHEBI:456216"/>
        <dbReference type="EC" id="6.3.3.1"/>
    </reaction>
</comment>
<comment type="pathway">
    <text evidence="2">Purine metabolism; IMP biosynthesis via de novo pathway; 5-amino-1-(5-phospho-D-ribosyl)imidazole from N(2)-formyl-N(1)-(5-phospho-D-ribosyl)glycinamide: step 2/2.</text>
</comment>
<comment type="subcellular location">
    <subcellularLocation>
        <location evidence="2">Cytoplasm</location>
    </subcellularLocation>
</comment>
<comment type="similarity">
    <text evidence="2">Belongs to the AIR synthase family.</text>
</comment>
<keyword id="KW-0067">ATP-binding</keyword>
<keyword id="KW-0963">Cytoplasm</keyword>
<keyword id="KW-0436">Ligase</keyword>
<keyword id="KW-0547">Nucleotide-binding</keyword>
<keyword id="KW-0658">Purine biosynthesis</keyword>
<name>PUR5_ECOUT</name>
<accession>Q1R8N9</accession>
<sequence>MTDKTSLSYKDAGVDIDAGNALVGRIKGVVKKTRRPEVMGGLGGFGALCALPQKYREPVLVSGTDGVGTKLRLAMDLKRHDTIGIDLVAMCVNDLVVQGAEPLFFLDYYATGKLDVNTASAVISGIAEGCLQSGCSLVGGETAEMPGMYHGEDYDVAGFCVGVVEKSEIIDGSKVSDGDVLIALGSSGPHSNGYSLVRKILEVSGCDPQTTELDGKPLADHLLAPTRIYVKSVLELIEKVDVHAIAHLTGGGFWENIPRVLPDNTQAVIDESSWQWPEVFNWLQTAGNVERHEMYRTFNCGVGMIIALPAPEVDKALALLNANGENAWKIGIIKTSDSEQRVVIE</sequence>
<gene>
    <name evidence="2" type="primary">purM</name>
    <name type="ordered locus">UTI89_C2815</name>
</gene>
<protein>
    <recommendedName>
        <fullName evidence="2">Phosphoribosylformylglycinamidine cyclo-ligase</fullName>
        <ecNumber evidence="2">6.3.3.1</ecNumber>
    </recommendedName>
    <alternativeName>
        <fullName evidence="2">AIR synthase</fullName>
    </alternativeName>
    <alternativeName>
        <fullName evidence="2">AIRS</fullName>
    </alternativeName>
    <alternativeName>
        <fullName evidence="2">Phosphoribosyl-aminoimidazole synthetase</fullName>
    </alternativeName>
</protein>
<organism>
    <name type="scientific">Escherichia coli (strain UTI89 / UPEC)</name>
    <dbReference type="NCBI Taxonomy" id="364106"/>
    <lineage>
        <taxon>Bacteria</taxon>
        <taxon>Pseudomonadati</taxon>
        <taxon>Pseudomonadota</taxon>
        <taxon>Gammaproteobacteria</taxon>
        <taxon>Enterobacterales</taxon>
        <taxon>Enterobacteriaceae</taxon>
        <taxon>Escherichia</taxon>
    </lineage>
</organism>
<reference key="1">
    <citation type="journal article" date="2006" name="Proc. Natl. Acad. Sci. U.S.A.">
        <title>Identification of genes subject to positive selection in uropathogenic strains of Escherichia coli: a comparative genomics approach.</title>
        <authorList>
            <person name="Chen S.L."/>
            <person name="Hung C.-S."/>
            <person name="Xu J."/>
            <person name="Reigstad C.S."/>
            <person name="Magrini V."/>
            <person name="Sabo A."/>
            <person name="Blasiar D."/>
            <person name="Bieri T."/>
            <person name="Meyer R.R."/>
            <person name="Ozersky P."/>
            <person name="Armstrong J.R."/>
            <person name="Fulton R.S."/>
            <person name="Latreille J.P."/>
            <person name="Spieth J."/>
            <person name="Hooton T.M."/>
            <person name="Mardis E.R."/>
            <person name="Hultgren S.J."/>
            <person name="Gordon J.I."/>
        </authorList>
    </citation>
    <scope>NUCLEOTIDE SEQUENCE [LARGE SCALE GENOMIC DNA]</scope>
    <source>
        <strain>UTI89 / UPEC</strain>
    </source>
</reference>
<dbReference type="EC" id="6.3.3.1" evidence="2"/>
<dbReference type="EMBL" id="CP000243">
    <property type="protein sequence ID" value="ABE08275.1"/>
    <property type="molecule type" value="Genomic_DNA"/>
</dbReference>
<dbReference type="RefSeq" id="WP_001350863.1">
    <property type="nucleotide sequence ID" value="NZ_CP064825.1"/>
</dbReference>
<dbReference type="SMR" id="Q1R8N9"/>
<dbReference type="KEGG" id="eci:UTI89_C2815"/>
<dbReference type="HOGENOM" id="CLU_047116_0_0_6"/>
<dbReference type="UniPathway" id="UPA00074">
    <property type="reaction ID" value="UER00129"/>
</dbReference>
<dbReference type="Proteomes" id="UP000001952">
    <property type="component" value="Chromosome"/>
</dbReference>
<dbReference type="GO" id="GO:0005829">
    <property type="term" value="C:cytosol"/>
    <property type="evidence" value="ECO:0007669"/>
    <property type="project" value="TreeGrafter"/>
</dbReference>
<dbReference type="GO" id="GO:0005524">
    <property type="term" value="F:ATP binding"/>
    <property type="evidence" value="ECO:0007669"/>
    <property type="project" value="UniProtKB-KW"/>
</dbReference>
<dbReference type="GO" id="GO:0004637">
    <property type="term" value="F:phosphoribosylamine-glycine ligase activity"/>
    <property type="evidence" value="ECO:0007669"/>
    <property type="project" value="TreeGrafter"/>
</dbReference>
<dbReference type="GO" id="GO:0004641">
    <property type="term" value="F:phosphoribosylformylglycinamidine cyclo-ligase activity"/>
    <property type="evidence" value="ECO:0007669"/>
    <property type="project" value="UniProtKB-UniRule"/>
</dbReference>
<dbReference type="GO" id="GO:0006189">
    <property type="term" value="P:'de novo' IMP biosynthetic process"/>
    <property type="evidence" value="ECO:0007669"/>
    <property type="project" value="UniProtKB-UniRule"/>
</dbReference>
<dbReference type="GO" id="GO:0046084">
    <property type="term" value="P:adenine biosynthetic process"/>
    <property type="evidence" value="ECO:0007669"/>
    <property type="project" value="TreeGrafter"/>
</dbReference>
<dbReference type="CDD" id="cd02196">
    <property type="entry name" value="PurM"/>
    <property type="match status" value="1"/>
</dbReference>
<dbReference type="FunFam" id="3.30.1330.10:FF:000001">
    <property type="entry name" value="Phosphoribosylformylglycinamidine cyclo-ligase"/>
    <property type="match status" value="1"/>
</dbReference>
<dbReference type="FunFam" id="3.90.650.10:FF:000001">
    <property type="entry name" value="Phosphoribosylformylglycinamidine cyclo-ligase"/>
    <property type="match status" value="1"/>
</dbReference>
<dbReference type="Gene3D" id="3.90.650.10">
    <property type="entry name" value="PurM-like C-terminal domain"/>
    <property type="match status" value="1"/>
</dbReference>
<dbReference type="Gene3D" id="3.30.1330.10">
    <property type="entry name" value="PurM-like, N-terminal domain"/>
    <property type="match status" value="1"/>
</dbReference>
<dbReference type="HAMAP" id="MF_00741">
    <property type="entry name" value="AIRS"/>
    <property type="match status" value="1"/>
</dbReference>
<dbReference type="InterPro" id="IPR010918">
    <property type="entry name" value="PurM-like_C_dom"/>
</dbReference>
<dbReference type="InterPro" id="IPR036676">
    <property type="entry name" value="PurM-like_C_sf"/>
</dbReference>
<dbReference type="InterPro" id="IPR016188">
    <property type="entry name" value="PurM-like_N"/>
</dbReference>
<dbReference type="InterPro" id="IPR036921">
    <property type="entry name" value="PurM-like_N_sf"/>
</dbReference>
<dbReference type="InterPro" id="IPR004733">
    <property type="entry name" value="PurM_cligase"/>
</dbReference>
<dbReference type="NCBIfam" id="TIGR00878">
    <property type="entry name" value="purM"/>
    <property type="match status" value="1"/>
</dbReference>
<dbReference type="PANTHER" id="PTHR10520:SF12">
    <property type="entry name" value="TRIFUNCTIONAL PURINE BIOSYNTHETIC PROTEIN ADENOSINE-3"/>
    <property type="match status" value="1"/>
</dbReference>
<dbReference type="PANTHER" id="PTHR10520">
    <property type="entry name" value="TRIFUNCTIONAL PURINE BIOSYNTHETIC PROTEIN ADENOSINE-3-RELATED"/>
    <property type="match status" value="1"/>
</dbReference>
<dbReference type="Pfam" id="PF00586">
    <property type="entry name" value="AIRS"/>
    <property type="match status" value="1"/>
</dbReference>
<dbReference type="Pfam" id="PF02769">
    <property type="entry name" value="AIRS_C"/>
    <property type="match status" value="1"/>
</dbReference>
<dbReference type="SUPFAM" id="SSF56042">
    <property type="entry name" value="PurM C-terminal domain-like"/>
    <property type="match status" value="1"/>
</dbReference>
<dbReference type="SUPFAM" id="SSF55326">
    <property type="entry name" value="PurM N-terminal domain-like"/>
    <property type="match status" value="1"/>
</dbReference>
<feature type="initiator methionine" description="Removed" evidence="1">
    <location>
        <position position="1"/>
    </location>
</feature>
<feature type="chain" id="PRO_0000258354" description="Phosphoribosylformylglycinamidine cyclo-ligase">
    <location>
        <begin position="2"/>
        <end position="345"/>
    </location>
</feature>
<proteinExistence type="inferred from homology"/>
<evidence type="ECO:0000250" key="1"/>
<evidence type="ECO:0000255" key="2">
    <source>
        <dbReference type="HAMAP-Rule" id="MF_00741"/>
    </source>
</evidence>